<sequence>MGWISGFRLRLAANALRNGRIVAYPTEAVYGLGCDPFNEDAVRKLLALKRRSQIKGLILIAADVEAVESLVDLARVPLGAEVRAGWPGPTTWLIPPRPGIPDWLRGAHDSLAVRVTAHPVAAALCRVFGGAIVSTSANLSGHRPARTPVRLWRQFPRRAIHFLPGRLGGAVRPTAIFDAMSGRRIR</sequence>
<comment type="function">
    <text evidence="1">Required for the formation of a threonylcarbamoyl group on adenosine at position 37 (t(6)A37) in tRNAs that read codons beginning with adenine. Catalyzes the conversion of L-threonine, HCO(3)(-)/CO(2) and ATP to give threonylcarbamoyl-AMP (TC-AMP) as the acyladenylate intermediate, with the release of diphosphate.</text>
</comment>
<comment type="catalytic activity">
    <reaction evidence="1">
        <text>L-threonine + hydrogencarbonate + ATP = L-threonylcarbamoyladenylate + diphosphate + H2O</text>
        <dbReference type="Rhea" id="RHEA:36407"/>
        <dbReference type="ChEBI" id="CHEBI:15377"/>
        <dbReference type="ChEBI" id="CHEBI:17544"/>
        <dbReference type="ChEBI" id="CHEBI:30616"/>
        <dbReference type="ChEBI" id="CHEBI:33019"/>
        <dbReference type="ChEBI" id="CHEBI:57926"/>
        <dbReference type="ChEBI" id="CHEBI:73682"/>
        <dbReference type="EC" id="2.7.7.87"/>
    </reaction>
</comment>
<comment type="subcellular location">
    <subcellularLocation>
        <location evidence="1">Cytoplasm</location>
    </subcellularLocation>
</comment>
<comment type="similarity">
    <text evidence="1">Belongs to the SUA5 family. TsaC subfamily.</text>
</comment>
<proteinExistence type="inferred from homology"/>
<gene>
    <name evidence="1" type="primary">tsaC</name>
    <name type="synonym">rimN</name>
    <name type="ordered locus">MCA2838</name>
</gene>
<protein>
    <recommendedName>
        <fullName evidence="1">Threonylcarbamoyl-AMP synthase</fullName>
        <shortName evidence="1">TC-AMP synthase</shortName>
        <ecNumber evidence="1">2.7.7.87</ecNumber>
    </recommendedName>
    <alternativeName>
        <fullName evidence="1">L-threonylcarbamoyladenylate synthase</fullName>
    </alternativeName>
    <alternativeName>
        <fullName evidence="1">t(6)A37 threonylcarbamoyladenosine biosynthesis protein TsaC</fullName>
    </alternativeName>
    <alternativeName>
        <fullName evidence="1">tRNA threonylcarbamoyladenosine biosynthesis protein TsaC</fullName>
    </alternativeName>
</protein>
<reference key="1">
    <citation type="journal article" date="2004" name="PLoS Biol.">
        <title>Genomic insights into methanotrophy: the complete genome sequence of Methylococcus capsulatus (Bath).</title>
        <authorList>
            <person name="Ward N.L."/>
            <person name="Larsen O."/>
            <person name="Sakwa J."/>
            <person name="Bruseth L."/>
            <person name="Khouri H.M."/>
            <person name="Durkin A.S."/>
            <person name="Dimitrov G."/>
            <person name="Jiang L."/>
            <person name="Scanlan D."/>
            <person name="Kang K.H."/>
            <person name="Lewis M.R."/>
            <person name="Nelson K.E."/>
            <person name="Methe B.A."/>
            <person name="Wu M."/>
            <person name="Heidelberg J.F."/>
            <person name="Paulsen I.T."/>
            <person name="Fouts D.E."/>
            <person name="Ravel J."/>
            <person name="Tettelin H."/>
            <person name="Ren Q."/>
            <person name="Read T.D."/>
            <person name="DeBoy R.T."/>
            <person name="Seshadri R."/>
            <person name="Salzberg S.L."/>
            <person name="Jensen H.B."/>
            <person name="Birkeland N.K."/>
            <person name="Nelson W.C."/>
            <person name="Dodson R.J."/>
            <person name="Grindhaug S.H."/>
            <person name="Holt I.E."/>
            <person name="Eidhammer I."/>
            <person name="Jonasen I."/>
            <person name="Vanaken S."/>
            <person name="Utterback T.R."/>
            <person name="Feldblyum T.V."/>
            <person name="Fraser C.M."/>
            <person name="Lillehaug J.R."/>
            <person name="Eisen J.A."/>
        </authorList>
    </citation>
    <scope>NUCLEOTIDE SEQUENCE [LARGE SCALE GENOMIC DNA]</scope>
    <source>
        <strain>ATCC 33009 / NCIMB 11132 / Bath</strain>
    </source>
</reference>
<accession>Q603G8</accession>
<dbReference type="EC" id="2.7.7.87" evidence="1"/>
<dbReference type="EMBL" id="AE017282">
    <property type="protein sequence ID" value="AAU91144.1"/>
    <property type="molecule type" value="Genomic_DNA"/>
</dbReference>
<dbReference type="RefSeq" id="WP_010962037.1">
    <property type="nucleotide sequence ID" value="NC_002977.6"/>
</dbReference>
<dbReference type="SMR" id="Q603G8"/>
<dbReference type="STRING" id="243233.MCA2838"/>
<dbReference type="GeneID" id="88225013"/>
<dbReference type="KEGG" id="mca:MCA2838"/>
<dbReference type="eggNOG" id="COG0009">
    <property type="taxonomic scope" value="Bacteria"/>
</dbReference>
<dbReference type="HOGENOM" id="CLU_031397_6_0_6"/>
<dbReference type="Proteomes" id="UP000006821">
    <property type="component" value="Chromosome"/>
</dbReference>
<dbReference type="GO" id="GO:0005737">
    <property type="term" value="C:cytoplasm"/>
    <property type="evidence" value="ECO:0007669"/>
    <property type="project" value="UniProtKB-SubCell"/>
</dbReference>
<dbReference type="GO" id="GO:0005524">
    <property type="term" value="F:ATP binding"/>
    <property type="evidence" value="ECO:0007669"/>
    <property type="project" value="UniProtKB-UniRule"/>
</dbReference>
<dbReference type="GO" id="GO:0003725">
    <property type="term" value="F:double-stranded RNA binding"/>
    <property type="evidence" value="ECO:0007669"/>
    <property type="project" value="InterPro"/>
</dbReference>
<dbReference type="GO" id="GO:0061710">
    <property type="term" value="F:L-threonylcarbamoyladenylate synthase"/>
    <property type="evidence" value="ECO:0007669"/>
    <property type="project" value="UniProtKB-EC"/>
</dbReference>
<dbReference type="GO" id="GO:0000049">
    <property type="term" value="F:tRNA binding"/>
    <property type="evidence" value="ECO:0007669"/>
    <property type="project" value="TreeGrafter"/>
</dbReference>
<dbReference type="GO" id="GO:0006450">
    <property type="term" value="P:regulation of translational fidelity"/>
    <property type="evidence" value="ECO:0007669"/>
    <property type="project" value="TreeGrafter"/>
</dbReference>
<dbReference type="GO" id="GO:0002949">
    <property type="term" value="P:tRNA threonylcarbamoyladenosine modification"/>
    <property type="evidence" value="ECO:0007669"/>
    <property type="project" value="UniProtKB-UniRule"/>
</dbReference>
<dbReference type="Gene3D" id="3.90.870.10">
    <property type="entry name" value="DHBP synthase"/>
    <property type="match status" value="1"/>
</dbReference>
<dbReference type="HAMAP" id="MF_01852">
    <property type="entry name" value="TsaC"/>
    <property type="match status" value="1"/>
</dbReference>
<dbReference type="InterPro" id="IPR017945">
    <property type="entry name" value="DHBP_synth_RibB-like_a/b_dom"/>
</dbReference>
<dbReference type="InterPro" id="IPR006070">
    <property type="entry name" value="Sua5-like_dom"/>
</dbReference>
<dbReference type="InterPro" id="IPR023535">
    <property type="entry name" value="TC-AMP_synthase"/>
</dbReference>
<dbReference type="InterPro" id="IPR050156">
    <property type="entry name" value="TC-AMP_synthase_SUA5"/>
</dbReference>
<dbReference type="PANTHER" id="PTHR17490">
    <property type="entry name" value="SUA5"/>
    <property type="match status" value="1"/>
</dbReference>
<dbReference type="PANTHER" id="PTHR17490:SF18">
    <property type="entry name" value="THREONYLCARBAMOYL-AMP SYNTHASE"/>
    <property type="match status" value="1"/>
</dbReference>
<dbReference type="Pfam" id="PF01300">
    <property type="entry name" value="Sua5_yciO_yrdC"/>
    <property type="match status" value="1"/>
</dbReference>
<dbReference type="SUPFAM" id="SSF55821">
    <property type="entry name" value="YrdC/RibB"/>
    <property type="match status" value="1"/>
</dbReference>
<dbReference type="PROSITE" id="PS51163">
    <property type="entry name" value="YRDC"/>
    <property type="match status" value="1"/>
</dbReference>
<evidence type="ECO:0000255" key="1">
    <source>
        <dbReference type="HAMAP-Rule" id="MF_01852"/>
    </source>
</evidence>
<feature type="chain" id="PRO_0000352936" description="Threonylcarbamoyl-AMP synthase">
    <location>
        <begin position="1"/>
        <end position="186"/>
    </location>
</feature>
<feature type="domain" description="YrdC-like" evidence="1">
    <location>
        <begin position="6"/>
        <end position="186"/>
    </location>
</feature>
<organism>
    <name type="scientific">Methylococcus capsulatus (strain ATCC 33009 / NCIMB 11132 / Bath)</name>
    <dbReference type="NCBI Taxonomy" id="243233"/>
    <lineage>
        <taxon>Bacteria</taxon>
        <taxon>Pseudomonadati</taxon>
        <taxon>Pseudomonadota</taxon>
        <taxon>Gammaproteobacteria</taxon>
        <taxon>Methylococcales</taxon>
        <taxon>Methylococcaceae</taxon>
        <taxon>Methylococcus</taxon>
    </lineage>
</organism>
<name>TSAC_METCA</name>
<keyword id="KW-0067">ATP-binding</keyword>
<keyword id="KW-0963">Cytoplasm</keyword>
<keyword id="KW-0547">Nucleotide-binding</keyword>
<keyword id="KW-0548">Nucleotidyltransferase</keyword>
<keyword id="KW-1185">Reference proteome</keyword>
<keyword id="KW-0808">Transferase</keyword>
<keyword id="KW-0819">tRNA processing</keyword>